<sequence length="238" mass="26384">MTSILVSRFLLAALVLQYATIDAVNYCNLPCRGDRFHVGCGESAFAQECGESPETRDLLKEHTDEILSKINDVRDHVAKGSWGLPMAARMKVVVWDEELARLATRHTKGCLAETHACRNTERFSFPGQLNFEYTDDKLPQTKELIDAAIKKGHLQKHNISREIIESYRDNGPDGNVEELALALSDRVTAVGCGLTTWQDGAKARALLTCNFSSQTLGVDLSTKSGIVLDEKCIERMNV</sequence>
<reference evidence="6" key="1">
    <citation type="journal article" date="2009" name="Mol. Cell. Proteomics">
        <title>Anti-thrombosis repertoire of blood-feeding horsefly salivary glands.</title>
        <authorList>
            <person name="Ma D."/>
            <person name="Wang Y."/>
            <person name="Yang H."/>
            <person name="Wu J."/>
            <person name="An S."/>
            <person name="Gao L."/>
            <person name="Xu X."/>
            <person name="Lai R."/>
        </authorList>
    </citation>
    <scope>NUCLEOTIDE SEQUENCE [MRNA]</scope>
    <scope>PROTEIN SEQUENCE OF 24-54; 123-136; 169-185 AND 205-222</scope>
    <scope>SUBCELLULAR LOCATION</scope>
    <scope>FUNCTION</scope>
    <source>
        <tissue>Salivary gland</tissue>
    </source>
</reference>
<protein>
    <recommendedName>
        <fullName evidence="3">Tabinhibitin 5</fullName>
    </recommendedName>
</protein>
<accession>C8YJA0</accession>
<name>INH5_TABYA</name>
<evidence type="ECO:0000255" key="1"/>
<evidence type="ECO:0000269" key="2">
    <source>
    </source>
</evidence>
<evidence type="ECO:0000303" key="3">
    <source>
    </source>
</evidence>
<evidence type="ECO:0000305" key="4"/>
<evidence type="ECO:0000305" key="5">
    <source>
    </source>
</evidence>
<evidence type="ECO:0000312" key="6">
    <source>
        <dbReference type="EMBL" id="ACS72295.1"/>
    </source>
</evidence>
<feature type="signal peptide" evidence="1 5">
    <location>
        <begin position="1"/>
        <end position="23"/>
    </location>
</feature>
<feature type="chain" id="PRO_5002994609" description="Tabinhibitin 5" evidence="5">
    <location>
        <begin position="24"/>
        <end position="238"/>
    </location>
</feature>
<feature type="domain" description="SCP" evidence="1">
    <location>
        <begin position="67"/>
        <end position="211"/>
    </location>
</feature>
<feature type="short sequence motif" description="Cell attachment site" evidence="5">
    <location>
        <begin position="32"/>
        <end position="34"/>
    </location>
</feature>
<proteinExistence type="evidence at protein level"/>
<dbReference type="EMBL" id="FJ469607">
    <property type="protein sequence ID" value="ACS72295.1"/>
    <property type="molecule type" value="mRNA"/>
</dbReference>
<dbReference type="SMR" id="C8YJA0"/>
<dbReference type="GO" id="GO:0005576">
    <property type="term" value="C:extracellular region"/>
    <property type="evidence" value="ECO:0007669"/>
    <property type="project" value="UniProtKB-SubCell"/>
</dbReference>
<dbReference type="GO" id="GO:0090729">
    <property type="term" value="F:toxin activity"/>
    <property type="evidence" value="ECO:0007669"/>
    <property type="project" value="UniProtKB-KW"/>
</dbReference>
<dbReference type="CDD" id="cd05380">
    <property type="entry name" value="CAP_euk"/>
    <property type="match status" value="1"/>
</dbReference>
<dbReference type="Gene3D" id="3.40.33.10">
    <property type="entry name" value="CAP"/>
    <property type="match status" value="1"/>
</dbReference>
<dbReference type="InterPro" id="IPR014044">
    <property type="entry name" value="CAP_dom"/>
</dbReference>
<dbReference type="InterPro" id="IPR035940">
    <property type="entry name" value="CAP_sf"/>
</dbReference>
<dbReference type="Pfam" id="PF00188">
    <property type="entry name" value="CAP"/>
    <property type="match status" value="1"/>
</dbReference>
<dbReference type="SUPFAM" id="SSF55797">
    <property type="entry name" value="PR-1-like"/>
    <property type="match status" value="1"/>
</dbReference>
<organism>
    <name type="scientific">Tabanus yao</name>
    <name type="common">Horsefly</name>
    <dbReference type="NCBI Taxonomy" id="485572"/>
    <lineage>
        <taxon>Eukaryota</taxon>
        <taxon>Metazoa</taxon>
        <taxon>Ecdysozoa</taxon>
        <taxon>Arthropoda</taxon>
        <taxon>Hexapoda</taxon>
        <taxon>Insecta</taxon>
        <taxon>Pterygota</taxon>
        <taxon>Neoptera</taxon>
        <taxon>Endopterygota</taxon>
        <taxon>Diptera</taxon>
        <taxon>Brachycera</taxon>
        <taxon>Tabanomorpha</taxon>
        <taxon>Tabanoidea</taxon>
        <taxon>Tabanidae</taxon>
        <taxon>Tabanus</taxon>
    </lineage>
</organism>
<keyword id="KW-1217">Cell adhesion impairing toxin</keyword>
<keyword id="KW-0903">Direct protein sequencing</keyword>
<keyword id="KW-1199">Hemostasis impairing toxin</keyword>
<keyword id="KW-1201">Platelet aggregation inhibiting toxin</keyword>
<keyword id="KW-0964">Secreted</keyword>
<keyword id="KW-0732">Signal</keyword>
<keyword id="KW-0800">Toxin</keyword>
<comment type="function">
    <text evidence="2">Inhibits platelet aggregation induced by all agonists tested (ADP, arachidonic acid, the thromboxane A2 analog U46619, thrombin, and snake venom snaclecs (TMVA that activates platelet through GPIB, and stejnulxin that specifically acts through GPVI (GP6))) (PubMed:19531497). May act by competing with fibrinogen for binding to glycoprotein IIb/IIIa (ITGA2B/ITGB3) (PubMed:19531497).</text>
</comment>
<comment type="subcellular location">
    <subcellularLocation>
        <location evidence="2">Secreted</location>
    </subcellularLocation>
</comment>
<comment type="tissue specificity">
    <text evidence="5">Expressed in salivary glands.</text>
</comment>
<comment type="similarity">
    <text evidence="4">Belongs to the CRISP family.</text>
</comment>